<gene>
    <name type="primary">pcbG</name>
    <name type="ordered locus">PMN2A_0723</name>
</gene>
<protein>
    <recommendedName>
        <fullName>Divinyl chlorophyll a/b light-harvesting protein PcbG</fullName>
    </recommendedName>
</protein>
<organism>
    <name type="scientific">Prochlorococcus marinus (strain NATL2A)</name>
    <dbReference type="NCBI Taxonomy" id="59920"/>
    <lineage>
        <taxon>Bacteria</taxon>
        <taxon>Bacillati</taxon>
        <taxon>Cyanobacteriota</taxon>
        <taxon>Cyanophyceae</taxon>
        <taxon>Synechococcales</taxon>
        <taxon>Prochlorococcaceae</taxon>
        <taxon>Prochlorococcus</taxon>
    </lineage>
</organism>
<dbReference type="EMBL" id="CP000095">
    <property type="protein sequence ID" value="AAZ58214.1"/>
    <property type="molecule type" value="Genomic_DNA"/>
</dbReference>
<dbReference type="RefSeq" id="WP_011294812.1">
    <property type="nucleotide sequence ID" value="NC_007335.2"/>
</dbReference>
<dbReference type="SMR" id="Q46JW4"/>
<dbReference type="STRING" id="59920.PMN2A_0723"/>
<dbReference type="KEGG" id="pmn:PMN2A_0723"/>
<dbReference type="HOGENOM" id="CLU_028310_0_0_3"/>
<dbReference type="OrthoDB" id="9429529at2"/>
<dbReference type="PhylomeDB" id="Q46JW4"/>
<dbReference type="Proteomes" id="UP000002535">
    <property type="component" value="Chromosome"/>
</dbReference>
<dbReference type="GO" id="GO:0009522">
    <property type="term" value="C:photosystem I"/>
    <property type="evidence" value="ECO:0007669"/>
    <property type="project" value="UniProtKB-KW"/>
</dbReference>
<dbReference type="GO" id="GO:0009523">
    <property type="term" value="C:photosystem II"/>
    <property type="evidence" value="ECO:0007669"/>
    <property type="project" value="UniProtKB-KW"/>
</dbReference>
<dbReference type="GO" id="GO:0031676">
    <property type="term" value="C:plasma membrane-derived thylakoid membrane"/>
    <property type="evidence" value="ECO:0007669"/>
    <property type="project" value="UniProtKB-SubCell"/>
</dbReference>
<dbReference type="GO" id="GO:0016168">
    <property type="term" value="F:chlorophyll binding"/>
    <property type="evidence" value="ECO:0007669"/>
    <property type="project" value="UniProtKB-KW"/>
</dbReference>
<dbReference type="GO" id="GO:0009767">
    <property type="term" value="P:photosynthetic electron transport chain"/>
    <property type="evidence" value="ECO:0007669"/>
    <property type="project" value="InterPro"/>
</dbReference>
<dbReference type="InterPro" id="IPR000932">
    <property type="entry name" value="PS_antenna-like"/>
</dbReference>
<dbReference type="InterPro" id="IPR036001">
    <property type="entry name" value="PS_II_antenna-like_sf"/>
</dbReference>
<dbReference type="NCBIfam" id="TIGR03041">
    <property type="entry name" value="PS_antenn_a_b"/>
    <property type="match status" value="1"/>
</dbReference>
<dbReference type="Pfam" id="PF00421">
    <property type="entry name" value="PSII"/>
    <property type="match status" value="1"/>
</dbReference>
<dbReference type="SUPFAM" id="SSF161077">
    <property type="entry name" value="Photosystem II antenna protein-like"/>
    <property type="match status" value="1"/>
</dbReference>
<feature type="chain" id="PRO_0000077555" description="Divinyl chlorophyll a/b light-harvesting protein PcbG">
    <location>
        <begin position="1"/>
        <end position="354"/>
    </location>
</feature>
<feature type="transmembrane region" description="Helical" evidence="3">
    <location>
        <begin position="27"/>
        <end position="47"/>
    </location>
</feature>
<feature type="transmembrane region" description="Helical" evidence="3">
    <location>
        <begin position="65"/>
        <end position="85"/>
    </location>
</feature>
<feature type="transmembrane region" description="Helical" evidence="3">
    <location>
        <begin position="88"/>
        <end position="108"/>
    </location>
</feature>
<feature type="transmembrane region" description="Helical" evidence="3">
    <location>
        <begin position="201"/>
        <end position="221"/>
    </location>
</feature>
<feature type="transmembrane region" description="Helical" evidence="3">
    <location>
        <begin position="241"/>
        <end position="261"/>
    </location>
</feature>
<feature type="transmembrane region" description="Helical" evidence="3">
    <location>
        <begin position="308"/>
        <end position="328"/>
    </location>
</feature>
<evidence type="ECO:0000250" key="1"/>
<evidence type="ECO:0000250" key="2">
    <source>
        <dbReference type="UniProtKB" id="Q6Q972"/>
    </source>
</evidence>
<evidence type="ECO:0000255" key="3"/>
<evidence type="ECO:0000303" key="4">
    <source>
    </source>
</evidence>
<evidence type="ECO:0000305" key="5"/>
<accession>Q46JW4</accession>
<comment type="function">
    <text evidence="2">The antenna complex functions as a light receptor, it captures and delivers excitation energy to photosystems II and I. The Prochlorales pcb genes are not related to higher plant LHCs.</text>
</comment>
<comment type="cofactor">
    <cofactor evidence="2">
        <name>divinyl chlorophyll a</name>
        <dbReference type="ChEBI" id="CHEBI:73095"/>
    </cofactor>
</comment>
<comment type="cofactor">
    <cofactor evidence="2">
        <name>divinyl chlorophyll b</name>
        <dbReference type="ChEBI" id="CHEBI:73096"/>
    </cofactor>
</comment>
<comment type="subunit">
    <text evidence="2">The antenna complex consists of divinyl chlorophylls (a and b) and divinyl chlorophyll a/b binding proteins and binds more divinyl chlorophyll b than does the antenna complex from high-light-adapted Prochlorococcus.</text>
</comment>
<comment type="subcellular location">
    <subcellularLocation>
        <location evidence="2">Cellular thylakoid membrane</location>
        <topology evidence="1">Multi-pass membrane protein</topology>
    </subcellularLocation>
</comment>
<comment type="miscellaneous">
    <text evidence="4">This low-light-adapted strain contains 7 pcb genes.</text>
</comment>
<comment type="similarity">
    <text evidence="5">Belongs to the PsbB/PsbC family. IsiA/Pcb subfamily.</text>
</comment>
<name>PCBG_PROMT</name>
<reference key="1">
    <citation type="journal article" date="2007" name="PLoS Genet.">
        <title>Patterns and implications of gene gain and loss in the evolution of Prochlorococcus.</title>
        <authorList>
            <person name="Kettler G.C."/>
            <person name="Martiny A.C."/>
            <person name="Huang K."/>
            <person name="Zucker J."/>
            <person name="Coleman M.L."/>
            <person name="Rodrigue S."/>
            <person name="Chen F."/>
            <person name="Lapidus A."/>
            <person name="Ferriera S."/>
            <person name="Johnson J."/>
            <person name="Steglich C."/>
            <person name="Church G.M."/>
            <person name="Richardson P."/>
            <person name="Chisholm S.W."/>
        </authorList>
    </citation>
    <scope>NUCLEOTIDE SEQUENCE [LARGE SCALE GENOMIC DNA]</scope>
    <source>
        <strain>NATL2A</strain>
    </source>
</reference>
<proteinExistence type="inferred from homology"/>
<keyword id="KW-0148">Chlorophyll</keyword>
<keyword id="KW-0157">Chromophore</keyword>
<keyword id="KW-0472">Membrane</keyword>
<keyword id="KW-0602">Photosynthesis</keyword>
<keyword id="KW-0603">Photosystem I</keyword>
<keyword id="KW-0604">Photosystem II</keyword>
<keyword id="KW-1185">Reference proteome</keyword>
<keyword id="KW-0793">Thylakoid</keyword>
<keyword id="KW-0812">Transmembrane</keyword>
<keyword id="KW-1133">Transmembrane helix</keyword>
<sequence>MQTYGNPDVTYGWWAGNSRVTNRAGKFIAAHAGHTGLISFAAGASTLWELARFDPSIAMGHQSSIFLAHLASIGIGFDDAGVWTGANVASVAIVHIIASLVYAGGALSHSLLFDGDLADGPGPTTQKFKLEWDNPDNLTFILGHHLIFFGVACIAFVEWARIHGIYDPAIGAVRQVEYNLNLTNIWNHQFDFLAIDNLEDVLGGHAFLAFVEITGGAFHIATKQVGEYTEFKGAGILSAEAVLSFSLAGIGWMAIVAAFWCATNTTVYPEPWFGEPLALKFGISPYWIDTVEVSESTALAGHTTRAALTNVHYYFGFFFLQGHLWHAIRALGFDFRRVTNAVAGLDRAQITLND</sequence>